<proteinExistence type="inferred from homology"/>
<name>HIS8_ECO8A</name>
<sequence>MSTVTITDLARENVRNLTPYQSARRLGGNGDVWLNANEYPTAVEFQLTQQTLNRYPECQPKAVIENYAQYAGVKPEQVLVSRGADEGIELLIRAFCEPGKDAILYCPPTYGMYSVSAETIGVECRTVPTLDNWQLDLQGISDKLDGVKVVYVCSPNNPTGQLINPQDFRTLLELTRGKAIVVADEAYIEFCPQASLAGWLAEYPHLAILRTLSKAFALAGLRCGFTLANEEVINLLMKVIAPYPLSTPVADIAAQALSPQGIVAMRERVAQIIAEREYLIAALKEIPCVEQVFDSETNYILARFKASSAVFKSLWDQGIILRDQNKQPSLSGCLRITVGTREESQRVIDALRAEQV</sequence>
<accession>B7M400</accession>
<organism>
    <name type="scientific">Escherichia coli O8 (strain IAI1)</name>
    <dbReference type="NCBI Taxonomy" id="585034"/>
    <lineage>
        <taxon>Bacteria</taxon>
        <taxon>Pseudomonadati</taxon>
        <taxon>Pseudomonadota</taxon>
        <taxon>Gammaproteobacteria</taxon>
        <taxon>Enterobacterales</taxon>
        <taxon>Enterobacteriaceae</taxon>
        <taxon>Escherichia</taxon>
    </lineage>
</organism>
<evidence type="ECO:0000255" key="1">
    <source>
        <dbReference type="HAMAP-Rule" id="MF_01023"/>
    </source>
</evidence>
<comment type="catalytic activity">
    <reaction evidence="1">
        <text>L-histidinol phosphate + 2-oxoglutarate = 3-(imidazol-4-yl)-2-oxopropyl phosphate + L-glutamate</text>
        <dbReference type="Rhea" id="RHEA:23744"/>
        <dbReference type="ChEBI" id="CHEBI:16810"/>
        <dbReference type="ChEBI" id="CHEBI:29985"/>
        <dbReference type="ChEBI" id="CHEBI:57766"/>
        <dbReference type="ChEBI" id="CHEBI:57980"/>
        <dbReference type="EC" id="2.6.1.9"/>
    </reaction>
</comment>
<comment type="cofactor">
    <cofactor evidence="1">
        <name>pyridoxal 5'-phosphate</name>
        <dbReference type="ChEBI" id="CHEBI:597326"/>
    </cofactor>
</comment>
<comment type="pathway">
    <text evidence="1">Amino-acid biosynthesis; L-histidine biosynthesis; L-histidine from 5-phospho-alpha-D-ribose 1-diphosphate: step 7/9.</text>
</comment>
<comment type="subunit">
    <text evidence="1">Homodimer.</text>
</comment>
<comment type="similarity">
    <text evidence="1">Belongs to the class-II pyridoxal-phosphate-dependent aminotransferase family. Histidinol-phosphate aminotransferase subfamily.</text>
</comment>
<gene>
    <name evidence="1" type="primary">hisC</name>
    <name type="ordered locus">ECIAI1_2091</name>
</gene>
<dbReference type="EC" id="2.6.1.9" evidence="1"/>
<dbReference type="EMBL" id="CU928160">
    <property type="protein sequence ID" value="CAQ98939.1"/>
    <property type="molecule type" value="Genomic_DNA"/>
</dbReference>
<dbReference type="RefSeq" id="WP_000108941.1">
    <property type="nucleotide sequence ID" value="NC_011741.1"/>
</dbReference>
<dbReference type="SMR" id="B7M400"/>
<dbReference type="KEGG" id="ecr:ECIAI1_2091"/>
<dbReference type="HOGENOM" id="CLU_017584_3_1_6"/>
<dbReference type="UniPathway" id="UPA00031">
    <property type="reaction ID" value="UER00012"/>
</dbReference>
<dbReference type="GO" id="GO:0004400">
    <property type="term" value="F:histidinol-phosphate transaminase activity"/>
    <property type="evidence" value="ECO:0007669"/>
    <property type="project" value="UniProtKB-UniRule"/>
</dbReference>
<dbReference type="GO" id="GO:0030170">
    <property type="term" value="F:pyridoxal phosphate binding"/>
    <property type="evidence" value="ECO:0007669"/>
    <property type="project" value="InterPro"/>
</dbReference>
<dbReference type="GO" id="GO:0000105">
    <property type="term" value="P:L-histidine biosynthetic process"/>
    <property type="evidence" value="ECO:0007669"/>
    <property type="project" value="UniProtKB-UniRule"/>
</dbReference>
<dbReference type="CDD" id="cd00609">
    <property type="entry name" value="AAT_like"/>
    <property type="match status" value="1"/>
</dbReference>
<dbReference type="FunFam" id="3.40.640.10:FF:000032">
    <property type="entry name" value="Histidinol-phosphate aminotransferase"/>
    <property type="match status" value="1"/>
</dbReference>
<dbReference type="FunFam" id="3.90.1150.10:FF:000042">
    <property type="entry name" value="Histidinol-phosphate aminotransferase"/>
    <property type="match status" value="1"/>
</dbReference>
<dbReference type="Gene3D" id="3.90.1150.10">
    <property type="entry name" value="Aspartate Aminotransferase, domain 1"/>
    <property type="match status" value="1"/>
</dbReference>
<dbReference type="Gene3D" id="3.40.640.10">
    <property type="entry name" value="Type I PLP-dependent aspartate aminotransferase-like (Major domain)"/>
    <property type="match status" value="1"/>
</dbReference>
<dbReference type="HAMAP" id="MF_01023">
    <property type="entry name" value="HisC_aminotrans_2"/>
    <property type="match status" value="1"/>
</dbReference>
<dbReference type="InterPro" id="IPR001917">
    <property type="entry name" value="Aminotrans_II_pyridoxalP_BS"/>
</dbReference>
<dbReference type="InterPro" id="IPR004839">
    <property type="entry name" value="Aminotransferase_I/II_large"/>
</dbReference>
<dbReference type="InterPro" id="IPR005861">
    <property type="entry name" value="HisP_aminotrans"/>
</dbReference>
<dbReference type="InterPro" id="IPR015424">
    <property type="entry name" value="PyrdxlP-dep_Trfase"/>
</dbReference>
<dbReference type="InterPro" id="IPR015421">
    <property type="entry name" value="PyrdxlP-dep_Trfase_major"/>
</dbReference>
<dbReference type="InterPro" id="IPR015422">
    <property type="entry name" value="PyrdxlP-dep_Trfase_small"/>
</dbReference>
<dbReference type="NCBIfam" id="TIGR01141">
    <property type="entry name" value="hisC"/>
    <property type="match status" value="1"/>
</dbReference>
<dbReference type="PANTHER" id="PTHR42885:SF2">
    <property type="entry name" value="HISTIDINOL-PHOSPHATE AMINOTRANSFERASE"/>
    <property type="match status" value="1"/>
</dbReference>
<dbReference type="PANTHER" id="PTHR42885">
    <property type="entry name" value="HISTIDINOL-PHOSPHATE AMINOTRANSFERASE-RELATED"/>
    <property type="match status" value="1"/>
</dbReference>
<dbReference type="Pfam" id="PF00155">
    <property type="entry name" value="Aminotran_1_2"/>
    <property type="match status" value="1"/>
</dbReference>
<dbReference type="SUPFAM" id="SSF53383">
    <property type="entry name" value="PLP-dependent transferases"/>
    <property type="match status" value="1"/>
</dbReference>
<dbReference type="PROSITE" id="PS00599">
    <property type="entry name" value="AA_TRANSFER_CLASS_2"/>
    <property type="match status" value="1"/>
</dbReference>
<feature type="chain" id="PRO_1000135394" description="Histidinol-phosphate aminotransferase">
    <location>
        <begin position="1"/>
        <end position="356"/>
    </location>
</feature>
<feature type="modified residue" description="N6-(pyridoxal phosphate)lysine" evidence="1">
    <location>
        <position position="214"/>
    </location>
</feature>
<keyword id="KW-0028">Amino-acid biosynthesis</keyword>
<keyword id="KW-0032">Aminotransferase</keyword>
<keyword id="KW-0368">Histidine biosynthesis</keyword>
<keyword id="KW-0663">Pyridoxal phosphate</keyword>
<keyword id="KW-0808">Transferase</keyword>
<protein>
    <recommendedName>
        <fullName evidence="1">Histidinol-phosphate aminotransferase</fullName>
        <ecNumber evidence="1">2.6.1.9</ecNumber>
    </recommendedName>
    <alternativeName>
        <fullName evidence="1">Imidazole acetol-phosphate transaminase</fullName>
    </alternativeName>
</protein>
<reference key="1">
    <citation type="journal article" date="2009" name="PLoS Genet.">
        <title>Organised genome dynamics in the Escherichia coli species results in highly diverse adaptive paths.</title>
        <authorList>
            <person name="Touchon M."/>
            <person name="Hoede C."/>
            <person name="Tenaillon O."/>
            <person name="Barbe V."/>
            <person name="Baeriswyl S."/>
            <person name="Bidet P."/>
            <person name="Bingen E."/>
            <person name="Bonacorsi S."/>
            <person name="Bouchier C."/>
            <person name="Bouvet O."/>
            <person name="Calteau A."/>
            <person name="Chiapello H."/>
            <person name="Clermont O."/>
            <person name="Cruveiller S."/>
            <person name="Danchin A."/>
            <person name="Diard M."/>
            <person name="Dossat C."/>
            <person name="Karoui M.E."/>
            <person name="Frapy E."/>
            <person name="Garry L."/>
            <person name="Ghigo J.M."/>
            <person name="Gilles A.M."/>
            <person name="Johnson J."/>
            <person name="Le Bouguenec C."/>
            <person name="Lescat M."/>
            <person name="Mangenot S."/>
            <person name="Martinez-Jehanne V."/>
            <person name="Matic I."/>
            <person name="Nassif X."/>
            <person name="Oztas S."/>
            <person name="Petit M.A."/>
            <person name="Pichon C."/>
            <person name="Rouy Z."/>
            <person name="Ruf C.S."/>
            <person name="Schneider D."/>
            <person name="Tourret J."/>
            <person name="Vacherie B."/>
            <person name="Vallenet D."/>
            <person name="Medigue C."/>
            <person name="Rocha E.P.C."/>
            <person name="Denamur E."/>
        </authorList>
    </citation>
    <scope>NUCLEOTIDE SEQUENCE [LARGE SCALE GENOMIC DNA]</scope>
    <source>
        <strain>IAI1</strain>
    </source>
</reference>